<feature type="signal peptide" evidence="1">
    <location>
        <begin position="1"/>
        <end position="25"/>
    </location>
</feature>
<feature type="propeptide" id="PRO_0000450200" description="Inhibition peptide" evidence="1">
    <location>
        <begin position="26"/>
        <end position="217"/>
    </location>
</feature>
<feature type="chain" id="PRO_5004308256" description="Subtilisin-like protease 1" evidence="3">
    <location>
        <begin position="218"/>
        <end position="688"/>
    </location>
</feature>
<feature type="domain" description="Peptidase S8" evidence="5">
    <location>
        <begin position="343"/>
        <end position="661"/>
    </location>
</feature>
<feature type="region of interest" description="Disordered" evidence="7">
    <location>
        <begin position="99"/>
        <end position="129"/>
    </location>
</feature>
<feature type="region of interest" description="Disordered" evidence="7">
    <location>
        <begin position="264"/>
        <end position="284"/>
    </location>
</feature>
<feature type="region of interest" description="Disordered" evidence="7">
    <location>
        <begin position="303"/>
        <end position="332"/>
    </location>
</feature>
<feature type="compositionally biased region" description="Low complexity" evidence="7">
    <location>
        <begin position="106"/>
        <end position="122"/>
    </location>
</feature>
<feature type="compositionally biased region" description="Low complexity" evidence="7">
    <location>
        <begin position="303"/>
        <end position="328"/>
    </location>
</feature>
<feature type="active site" description="Charge relay system" evidence="5">
    <location>
        <position position="372"/>
    </location>
</feature>
<feature type="active site" description="Charge relay system" evidence="5">
    <location>
        <position position="428"/>
    </location>
</feature>
<feature type="active site" description="Charge relay system" evidence="5">
    <location>
        <position position="606"/>
    </location>
</feature>
<feature type="binding site" evidence="14 21">
    <location>
        <position position="145"/>
    </location>
    <ligand>
        <name>Ca(2+)</name>
        <dbReference type="ChEBI" id="CHEBI:29108"/>
        <label>4</label>
    </ligand>
</feature>
<feature type="binding site" evidence="14 21">
    <location>
        <position position="148"/>
    </location>
    <ligand>
        <name>Ca(2+)</name>
        <dbReference type="ChEBI" id="CHEBI:29108"/>
        <label>4</label>
    </ligand>
</feature>
<feature type="binding site" evidence="14 21">
    <location>
        <position position="150"/>
    </location>
    <ligand>
        <name>Ca(2+)</name>
        <dbReference type="ChEBI" id="CHEBI:29108"/>
        <label>4</label>
    </ligand>
</feature>
<feature type="binding site" evidence="14 21">
    <location>
        <position position="205"/>
    </location>
    <ligand>
        <name>Ca(2+)</name>
        <dbReference type="ChEBI" id="CHEBI:29108"/>
        <label>4</label>
    </ligand>
</feature>
<feature type="binding site" evidence="14 21">
    <location>
        <position position="337"/>
    </location>
    <ligand>
        <name>Ca(2+)</name>
        <dbReference type="ChEBI" id="CHEBI:29108"/>
        <label>1</label>
    </ligand>
</feature>
<feature type="binding site" evidence="14 21">
    <location>
        <position position="381"/>
    </location>
    <ligand>
        <name>Ca(2+)</name>
        <dbReference type="ChEBI" id="CHEBI:29108"/>
        <label>1</label>
    </ligand>
</feature>
<feature type="binding site" evidence="14 21">
    <location>
        <position position="392"/>
    </location>
    <ligand>
        <name>Ca(2+)</name>
        <dbReference type="ChEBI" id="CHEBI:29108"/>
        <label>2</label>
    </ligand>
</feature>
<feature type="binding site" evidence="14 21">
    <location>
        <position position="392"/>
    </location>
    <ligand>
        <name>Ca(2+)</name>
        <dbReference type="ChEBI" id="CHEBI:29108"/>
        <label>3</label>
    </ligand>
</feature>
<feature type="binding site" evidence="14 21">
    <location>
        <position position="396"/>
    </location>
    <ligand>
        <name>Ca(2+)</name>
        <dbReference type="ChEBI" id="CHEBI:29108"/>
        <label>2</label>
    </ligand>
</feature>
<feature type="binding site" evidence="14 21">
    <location>
        <position position="399"/>
    </location>
    <ligand>
        <name>Ca(2+)</name>
        <dbReference type="ChEBI" id="CHEBI:29108"/>
        <label>2</label>
    </ligand>
</feature>
<feature type="binding site" evidence="14 21">
    <location>
        <position position="400"/>
    </location>
    <ligand>
        <name>Ca(2+)</name>
        <dbReference type="ChEBI" id="CHEBI:29108"/>
        <label>3</label>
    </ligand>
</feature>
<feature type="binding site" evidence="14 21">
    <location>
        <position position="401"/>
    </location>
    <ligand>
        <name>Ca(2+)</name>
        <dbReference type="ChEBI" id="CHEBI:29108"/>
        <label>2</label>
    </ligand>
</feature>
<feature type="binding site" evidence="14 21">
    <location>
        <position position="402"/>
    </location>
    <ligand>
        <name>Ca(2+)</name>
        <dbReference type="ChEBI" id="CHEBI:29108"/>
        <label>3</label>
    </ligand>
</feature>
<feature type="binding site" evidence="14 21">
    <location>
        <position position="404"/>
    </location>
    <ligand>
        <name>Ca(2+)</name>
        <dbReference type="ChEBI" id="CHEBI:29108"/>
        <label>3</label>
    </ligand>
</feature>
<feature type="binding site" evidence="14 21">
    <location>
        <position position="406"/>
    </location>
    <ligand>
        <name>Ca(2+)</name>
        <dbReference type="ChEBI" id="CHEBI:29108"/>
        <label>3</label>
    </ligand>
</feature>
<feature type="binding site" evidence="14 21">
    <location>
        <position position="408"/>
    </location>
    <ligand>
        <name>Ca(2+)</name>
        <dbReference type="ChEBI" id="CHEBI:29108"/>
        <label>2</label>
    </ligand>
</feature>
<feature type="binding site" evidence="14 21">
    <location>
        <position position="409"/>
    </location>
    <ligand>
        <name>Ca(2+)</name>
        <dbReference type="ChEBI" id="CHEBI:29108"/>
        <label>3</label>
    </ligand>
</feature>
<feature type="binding site" evidence="14 21">
    <location>
        <position position="439"/>
    </location>
    <ligand>
        <name>Ca(2+)</name>
        <dbReference type="ChEBI" id="CHEBI:29108"/>
        <label>1</label>
    </ligand>
</feature>
<feature type="binding site" evidence="14 21">
    <location>
        <position position="442"/>
    </location>
    <ligand>
        <name>Ca(2+)</name>
        <dbReference type="ChEBI" id="CHEBI:29108"/>
        <label>1</label>
    </ligand>
</feature>
<feature type="binding site" evidence="14 21">
    <location>
        <position position="444"/>
    </location>
    <ligand>
        <name>Ca(2+)</name>
        <dbReference type="ChEBI" id="CHEBI:29108"/>
        <label>1</label>
    </ligand>
</feature>
<feature type="binding site" evidence="14 21">
    <location>
        <position position="446"/>
    </location>
    <ligand>
        <name>Ca(2+)</name>
        <dbReference type="ChEBI" id="CHEBI:29108"/>
        <label>1</label>
    </ligand>
</feature>
<feature type="site" description="Cleavage; by PMX" evidence="15">
    <location>
        <begin position="49"/>
        <end position="50"/>
    </location>
</feature>
<feature type="site" description="Cleavage; by PMX" evidence="15">
    <location>
        <begin position="152"/>
        <end position="153"/>
    </location>
</feature>
<feature type="site" description="Cleavage; by PMX" evidence="15">
    <location>
        <begin position="165"/>
        <end position="166"/>
    </location>
</feature>
<feature type="site" description="Cleavage; by autolysis" evidence="1">
    <location>
        <begin position="217"/>
        <end position="218"/>
    </location>
</feature>
<feature type="site" description="Cleavage; by PMX" evidence="13">
    <location>
        <begin position="243"/>
        <end position="244"/>
    </location>
</feature>
<feature type="site" description="Cleavage" evidence="1">
    <location>
        <begin position="249"/>
        <end position="250"/>
    </location>
</feature>
<feature type="glycosylation site" description="N-linked (GlcNAc...) asparagine" evidence="4">
    <location>
        <position position="112"/>
    </location>
</feature>
<feature type="glycosylation site" description="N-linked (GlcNAc...) asparagine" evidence="4">
    <location>
        <position position="171"/>
    </location>
</feature>
<feature type="glycosylation site" description="N-linked (GlcNAc...) asparagine" evidence="4">
    <location>
        <position position="261"/>
    </location>
</feature>
<feature type="glycosylation site" description="N-linked (GlcNAc...) asparagine" evidence="4">
    <location>
        <position position="317"/>
    </location>
</feature>
<feature type="glycosylation site" description="N-linked (GlcNAc...) asparagine" evidence="4">
    <location>
        <position position="322"/>
    </location>
</feature>
<feature type="glycosylation site" description="N-linked (GlcNAc...) asparagine" evidence="4">
    <location>
        <position position="417"/>
    </location>
</feature>
<feature type="glycosylation site" description="N-linked (GlcNAc...) asparagine" evidence="4">
    <location>
        <position position="488"/>
    </location>
</feature>
<feature type="glycosylation site" description="N-linked (GlcNAc...) asparagine" evidence="4">
    <location>
        <position position="501"/>
    </location>
</feature>
<feature type="glycosylation site" description="N-linked (GlcNAc...) asparagine" evidence="4">
    <location>
        <position position="520"/>
    </location>
</feature>
<feature type="glycosylation site" description="N-linked (GlcNAc...) asparagine" evidence="4">
    <location>
        <position position="603"/>
    </location>
</feature>
<feature type="glycosylation site" description="N-linked (GlcNAc...) asparagine" evidence="4">
    <location>
        <position position="675"/>
    </location>
</feature>
<feature type="disulfide bond" evidence="14 21">
    <location>
        <begin position="369"/>
        <end position="479"/>
    </location>
</feature>
<feature type="disulfide bond" evidence="14 21">
    <location>
        <begin position="458"/>
        <end position="475"/>
    </location>
</feature>
<feature type="disulfide bond" evidence="14 21">
    <location>
        <begin position="521"/>
        <end position="534"/>
    </location>
</feature>
<feature type="mutagenesis site" description="Loss of catalytic activity. Blood stage parasites are not viable." evidence="8">
    <original>S</original>
    <variation>A</variation>
    <location>
        <position position="606"/>
    </location>
</feature>
<feature type="helix" evidence="22">
    <location>
        <begin position="40"/>
        <end position="59"/>
    </location>
</feature>
<feature type="strand" evidence="22">
    <location>
        <begin position="62"/>
        <end position="64"/>
    </location>
</feature>
<feature type="helix" evidence="22">
    <location>
        <begin position="76"/>
        <end position="79"/>
    </location>
</feature>
<feature type="helix" evidence="22">
    <location>
        <begin position="82"/>
        <end position="96"/>
    </location>
</feature>
<feature type="strand" evidence="22">
    <location>
        <begin position="138"/>
        <end position="144"/>
    </location>
</feature>
<feature type="strand" evidence="22">
    <location>
        <begin position="146"/>
        <end position="150"/>
    </location>
</feature>
<feature type="turn" evidence="22">
    <location>
        <begin position="152"/>
        <end position="155"/>
    </location>
</feature>
<feature type="helix" evidence="22">
    <location>
        <begin position="156"/>
        <end position="158"/>
    </location>
</feature>
<feature type="helix" evidence="22">
    <location>
        <begin position="160"/>
        <end position="169"/>
    </location>
</feature>
<feature type="strand" evidence="22">
    <location>
        <begin position="170"/>
        <end position="175"/>
    </location>
</feature>
<feature type="helix" evidence="22">
    <location>
        <begin position="176"/>
        <end position="178"/>
    </location>
</feature>
<feature type="strand" evidence="22">
    <location>
        <begin position="180"/>
        <end position="185"/>
    </location>
</feature>
<feature type="helix" evidence="22">
    <location>
        <begin position="191"/>
        <end position="203"/>
    </location>
</feature>
<feature type="strand" evidence="22">
    <location>
        <begin position="206"/>
        <end position="210"/>
    </location>
</feature>
<feature type="strand" evidence="22">
    <location>
        <begin position="213"/>
        <end position="216"/>
    </location>
</feature>
<feature type="helix" evidence="22">
    <location>
        <begin position="340"/>
        <end position="342"/>
    </location>
</feature>
<feature type="helix" evidence="22">
    <location>
        <begin position="344"/>
        <end position="349"/>
    </location>
</feature>
<feature type="turn" evidence="22">
    <location>
        <begin position="352"/>
        <end position="354"/>
    </location>
</feature>
<feature type="helix" evidence="22">
    <location>
        <begin position="355"/>
        <end position="361"/>
    </location>
</feature>
<feature type="strand" evidence="22">
    <location>
        <begin position="367"/>
        <end position="373"/>
    </location>
</feature>
<feature type="turn" evidence="22">
    <location>
        <begin position="380"/>
        <end position="382"/>
    </location>
</feature>
<feature type="helix" evidence="22">
    <location>
        <begin position="383"/>
        <end position="385"/>
    </location>
</feature>
<feature type="helix" evidence="22">
    <location>
        <begin position="390"/>
        <end position="394"/>
    </location>
</feature>
<feature type="strand" evidence="22">
    <location>
        <begin position="410"/>
        <end position="414"/>
    </location>
</feature>
<feature type="turn" evidence="22">
    <location>
        <begin position="415"/>
        <end position="418"/>
    </location>
</feature>
<feature type="strand" evidence="22">
    <location>
        <begin position="425"/>
        <end position="427"/>
    </location>
</feature>
<feature type="helix" evidence="22">
    <location>
        <begin position="428"/>
        <end position="437"/>
    </location>
</feature>
<feature type="strand" evidence="22">
    <location>
        <begin position="441"/>
        <end position="445"/>
    </location>
</feature>
<feature type="strand" evidence="22">
    <location>
        <begin position="454"/>
        <end position="459"/>
    </location>
</feature>
<feature type="strand" evidence="22">
    <location>
        <begin position="465"/>
        <end position="468"/>
    </location>
</feature>
<feature type="helix" evidence="22">
    <location>
        <begin position="469"/>
        <end position="481"/>
    </location>
</feature>
<feature type="strand" evidence="22">
    <location>
        <begin position="485"/>
        <end position="489"/>
    </location>
</feature>
<feature type="strand" evidence="22">
    <location>
        <begin position="491"/>
        <end position="495"/>
    </location>
</feature>
<feature type="helix" evidence="22">
    <location>
        <begin position="498"/>
        <end position="509"/>
    </location>
</feature>
<feature type="strand" evidence="22">
    <location>
        <begin position="513"/>
        <end position="517"/>
    </location>
</feature>
<feature type="helix" evidence="22">
    <location>
        <begin position="532"/>
        <end position="534"/>
    </location>
</feature>
<feature type="turn" evidence="22">
    <location>
        <begin position="536"/>
        <end position="538"/>
    </location>
</feature>
<feature type="helix" evidence="22">
    <location>
        <begin position="544"/>
        <end position="548"/>
    </location>
</feature>
<feature type="strand" evidence="22">
    <location>
        <begin position="553"/>
        <end position="570"/>
    </location>
</feature>
<feature type="turn" evidence="22">
    <location>
        <begin position="578"/>
        <end position="580"/>
    </location>
</feature>
<feature type="strand" evidence="22">
    <location>
        <begin position="583"/>
        <end position="586"/>
    </location>
</feature>
<feature type="strand" evidence="22">
    <location>
        <begin position="588"/>
        <end position="594"/>
    </location>
</feature>
<feature type="turn" evidence="22">
    <location>
        <begin position="595"/>
        <end position="597"/>
    </location>
</feature>
<feature type="strand" evidence="22">
    <location>
        <begin position="598"/>
        <end position="602"/>
    </location>
</feature>
<feature type="turn" evidence="22">
    <location>
        <begin position="605"/>
        <end position="607"/>
    </location>
</feature>
<feature type="helix" evidence="22">
    <location>
        <begin position="608"/>
        <end position="622"/>
    </location>
</feature>
<feature type="helix" evidence="22">
    <location>
        <begin position="628"/>
        <end position="637"/>
    </location>
</feature>
<feature type="strand" evidence="22">
    <location>
        <begin position="639"/>
        <end position="641"/>
    </location>
</feature>
<feature type="helix" evidence="22">
    <location>
        <begin position="643"/>
        <end position="645"/>
    </location>
</feature>
<feature type="turn" evidence="22">
    <location>
        <begin position="646"/>
        <end position="648"/>
    </location>
</feature>
<feature type="strand" evidence="22">
    <location>
        <begin position="649"/>
        <end position="651"/>
    </location>
</feature>
<feature type="strand" evidence="22">
    <location>
        <begin position="653"/>
        <end position="655"/>
    </location>
</feature>
<feature type="helix" evidence="22">
    <location>
        <begin position="657"/>
        <end position="666"/>
    </location>
</feature>
<sequence>MMLNKKVVALCTLTLHLFCIFLCLGKEVRSEENGKIQDDAKKIVSELRFLEKVEDVIEKSNIGGNEVDADENSFNPDTEVPIEEIEEIKMRELKDVKEEKNKNDNHNNNNNNISSSSSSSSNTFGEEKEEVSKKKKKLRLIVSENHATTPSFFQESLLEPDVLSFLESKGNLSNLKNINSMIIELKEDTTDDELISYIKILEEKGALIESDKLVSADNIDISGIKDAIRRGEENIDVNDYKSMLEVENDAEDYDKMFGMFNESHAATSKRKRHSTNERGYDTFSSPSYKTYSKSDYLYDDDNNNNNYYYSHSSNGHNSSSRNSSSSRSRPGKYHFNDEFRNLQWGLDLSRLDETQELINEHQVMSTRICVIDSGIDYNHPDLKDNIELNLKELHGRKGFDDDNNGIVDDIYGANFVNNSGNPMDDNYHGTHVSGIISAIGNNNIGVVGVDVNSKLIICKALDEHKLGRLGDMFKCLDYCISRNAHMINGSFSFDEYSGIFNSSVEYLQRKGILFFVSASNCSHPKSSTPDIRKCDLSINAKYPPILSTVYDNVISVANLKKNDNNNHYSLSINSFYSNKYCQLAAPGTNIYSTAPHNSYRKLNGTSMAAPHVAAIASLIFSINPDLSYKKVIQILKDSIVYLPSLKNMVAWAGYADINKAVNLAIKSKKTYINSNISNKWKKKSRYLH</sequence>
<comment type="function">
    <text evidence="8 9 10 11">Serine protease which plays an essential role in merozoite invasion of and egress from host erythrocytes by processing and activating various merozoite surface and parasitophorous vacuole proteins (PubMed:18083098, PubMed:19214190, PubMed:21220481, PubMed:29459732). Mediates the proteolytic maturation of serine proteases SERA4, SERA5 and SERA6 just prior to merozoite egress (PubMed:18083098, PubMed:19214190, PubMed:29459732). Prior to merozoite egress, cleaves merozoite surface proteins MSP1, MSP6 and MSP7, which form the MSP1/6/7 complex, and thereby may prime the parasite cell surface for invasion of fresh erythrocytes (PubMed:19214190, PubMed:29459732). Prior to merozoite egress, cleaves MSRP2 converting it to MSRP2 p25 form, and RAP1 converting it to RAP1 p67 form (PubMed:21220481).</text>
</comment>
<comment type="catalytic activity">
    <reaction evidence="8 9 10 12 15">
        <text>Hydrolysis of proteins with broad specificity for peptide bonds, and a preference for a large uncharged residue in P1. Hydrolyzes peptide amides.</text>
        <dbReference type="EC" id="3.4.21.62"/>
    </reaction>
</comment>
<comment type="cofactor">
    <cofactor evidence="1">
        <name>Ca(2+)</name>
        <dbReference type="ChEBI" id="CHEBI:29108"/>
    </cofactor>
    <text evidence="1">Binds 3 Ca(2+) ions per subunit.</text>
</comment>
<comment type="activity regulation">
    <text evidence="8 9 12">p54 and probably p47 forms are inhibited by the non-covalent interaction with the cleaved propeptide (PubMed:19214190). Inhibited by subtilisin propeptide-like protein SUB1-ProM (PubMed:31942933). Inhibited by small molecule MRT12113 (PubMed:18083098).</text>
</comment>
<comment type="subunit">
    <text evidence="14 15">Heterodimer between p54 form and prodomain p31; the interaction inhibits p54 catalytic activity (PubMed:38969256). Heterodimer p31-p54 is monomeric at basic pH and dimeric at acidic pH; dimerization is driven by the N-terminal prodomain (p31) (PubMed:38386597, PubMed:38969256).</text>
</comment>
<comment type="interaction">
    <interactant intactId="EBI-1568896">
        <id>Q8I0V0</id>
    </interactant>
    <interactant intactId="EBI-824760">
        <id>O96164</id>
        <label>PF3D7_0207700</label>
    </interactant>
    <organismsDiffer>false</organismsDiffer>
    <experiments>2</experiments>
</comment>
<comment type="interaction">
    <interactant intactId="EBI-1568896">
        <id>Q8I0V0</id>
    </interactant>
    <interactant intactId="EBI-826913">
        <id>Q9TY95</id>
        <label>SERA5</label>
    </interactant>
    <organismsDiffer>false</organismsDiffer>
    <experiments>3</experiments>
</comment>
<comment type="interaction">
    <interactant intactId="EBI-1568896">
        <id>Q8I0V0</id>
    </interactant>
    <interactant intactId="EBI-827996">
        <id>Q9TY96</id>
        <label>SERA6</label>
    </interactant>
    <organismsDiffer>false</organismsDiffer>
    <experiments>2</experiments>
</comment>
<comment type="subcellular location">
    <subcellularLocation>
        <location evidence="8">Secreted</location>
    </subcellularLocation>
    <subcellularLocation>
        <location evidence="8">Parasitophorous vacuole lumen</location>
    </subcellularLocation>
    <text evidence="8">At the schizont stage, in merozoites, localizes to dense secretory granules called exonemes (PubMed:18083098). Just prior to egress secreted into the parasitophorous vacuole (PubMed:18083098).</text>
</comment>
<comment type="developmental stage">
    <text evidence="8 14">Expressed during the parasite blood stage, specifically in schizonts (at protein level) (PubMed:18083098). Detected in mature segmented schizonts containing merozoites prior to their egress (at protein level) (PubMed:38386597). Detected in cultures at the time of merozoite egress, composed of both mature schizonts and free merozoites (at protein level) (PubMed:38386597). The signal corresponding to the p31-free catalytic domain is detected at higher levels in schizonts prior to merozoite egress; prior to activation, SUB1 exists primarily as a dimer in the parasite (PubMed:38386597).</text>
</comment>
<comment type="PTM">
    <text evidence="1 2 13 15">The prodomain (p31) is cleaved, probably by autocatalysis, during the transport to or in the Golgi apparatus, and remains non-covalently associated with the p54 form as an inhibitor (By similarity). p54 is further cleaved into the p47 form (By similarity). The p54-to-p47 conversion can be also autocatalytic (By similarity). This cleavage is likely occurring in the exoneme prior to egress and is mediated by PMX/plasmepsin X (PubMed:32109369). Heterodimer p31-p54 is activated by cleavage of prodomain (p31) by the aspartic protease PMX; cleavage by PMX abolishes inhibitory capacity of p31 (PubMed:38969256). Primary autocatalytic processing of SUB1 is essential for parasite growth; the p54-to-p47 conversion is dispensable for SUB1 functions in the parasites (By similarity).</text>
</comment>
<comment type="PTM">
    <text evidence="1">The disulfide bond between Cys-521 and Cys-534 acts as a redox-sensitive disulfide switch. The oxidized form is required for catalytic activity.</text>
</comment>
<comment type="PTM">
    <text evidence="1">The relevance of the N-glycosylation is not clear. In an insect expression system, SUB1 glycosylation appears to affect its processing into the active mature form suggesting that SUB1 may not be N-glycosylated in parasites.</text>
</comment>
<comment type="disruption phenotype">
    <text evidence="8 11">Blood stage parasites are not viable (PubMed:18083098, PubMed:29459732). Initial schizont development is normal but merozoite egress is abolished due to a failure to rupture the parasitophorous vacuole membrane (PubMed:29459732).</text>
</comment>
<comment type="similarity">
    <text evidence="6">Belongs to the peptidase S8 family.</text>
</comment>
<gene>
    <name evidence="16 17" type="primary">SUB1</name>
    <name evidence="19" type="ORF">PF3D7_0507500</name>
</gene>
<evidence type="ECO:0000250" key="1">
    <source>
        <dbReference type="UniProtKB" id="O61142"/>
    </source>
</evidence>
<evidence type="ECO:0000250" key="2">
    <source>
        <dbReference type="UniProtKB" id="W7K9M0"/>
    </source>
</evidence>
<evidence type="ECO:0000255" key="3"/>
<evidence type="ECO:0000255" key="4">
    <source>
        <dbReference type="PROSITE-ProRule" id="PRU00498"/>
    </source>
</evidence>
<evidence type="ECO:0000255" key="5">
    <source>
        <dbReference type="PROSITE-ProRule" id="PRU01240"/>
    </source>
</evidence>
<evidence type="ECO:0000255" key="6">
    <source>
        <dbReference type="RuleBase" id="RU003355"/>
    </source>
</evidence>
<evidence type="ECO:0000256" key="7">
    <source>
        <dbReference type="SAM" id="MobiDB-lite"/>
    </source>
</evidence>
<evidence type="ECO:0000269" key="8">
    <source>
    </source>
</evidence>
<evidence type="ECO:0000269" key="9">
    <source>
    </source>
</evidence>
<evidence type="ECO:0000269" key="10">
    <source>
    </source>
</evidence>
<evidence type="ECO:0000269" key="11">
    <source>
    </source>
</evidence>
<evidence type="ECO:0000269" key="12">
    <source>
    </source>
</evidence>
<evidence type="ECO:0000269" key="13">
    <source>
    </source>
</evidence>
<evidence type="ECO:0000269" key="14">
    <source>
    </source>
</evidence>
<evidence type="ECO:0000269" key="15">
    <source>
    </source>
</evidence>
<evidence type="ECO:0000303" key="16">
    <source>
    </source>
</evidence>
<evidence type="ECO:0000303" key="17">
    <source>
    </source>
</evidence>
<evidence type="ECO:0000305" key="18"/>
<evidence type="ECO:0000312" key="19">
    <source>
        <dbReference type="EMBL" id="CAD51440.1"/>
    </source>
</evidence>
<evidence type="ECO:0000312" key="20">
    <source>
        <dbReference type="Proteomes" id="UP000001450"/>
    </source>
</evidence>
<evidence type="ECO:0007744" key="21">
    <source>
        <dbReference type="PDB" id="8POL"/>
    </source>
</evidence>
<evidence type="ECO:0007829" key="22">
    <source>
        <dbReference type="PDB" id="8POL"/>
    </source>
</evidence>
<keyword id="KW-0002">3D-structure</keyword>
<keyword id="KW-0106">Calcium</keyword>
<keyword id="KW-1015">Disulfide bond</keyword>
<keyword id="KW-0325">Glycoprotein</keyword>
<keyword id="KW-0378">Hydrolase</keyword>
<keyword id="KW-0479">Metal-binding</keyword>
<keyword id="KW-0645">Protease</keyword>
<keyword id="KW-1185">Reference proteome</keyword>
<keyword id="KW-0964">Secreted</keyword>
<keyword id="KW-0720">Serine protease</keyword>
<keyword id="KW-0732">Signal</keyword>
<keyword id="KW-0865">Zymogen</keyword>
<protein>
    <recommendedName>
        <fullName evidence="16">Subtilisin-like protease 1</fullName>
        <ecNumber evidence="8 9 10 12 15">3.4.21.62</ecNumber>
    </recommendedName>
    <alternativeName>
        <fullName evidence="16">PfSUB1</fullName>
    </alternativeName>
</protein>
<organism evidence="20">
    <name type="scientific">Plasmodium falciparum (isolate 3D7)</name>
    <dbReference type="NCBI Taxonomy" id="36329"/>
    <lineage>
        <taxon>Eukaryota</taxon>
        <taxon>Sar</taxon>
        <taxon>Alveolata</taxon>
        <taxon>Apicomplexa</taxon>
        <taxon>Aconoidasida</taxon>
        <taxon>Haemosporida</taxon>
        <taxon>Plasmodiidae</taxon>
        <taxon>Plasmodium</taxon>
        <taxon>Plasmodium (Laverania)</taxon>
    </lineage>
</organism>
<reference evidence="20" key="1">
    <citation type="journal article" date="2002" name="Nature">
        <title>Genome sequence of the human malaria parasite Plasmodium falciparum.</title>
        <authorList>
            <person name="Gardner M.J."/>
            <person name="Hall N."/>
            <person name="Fung E."/>
            <person name="White O."/>
            <person name="Berriman M."/>
            <person name="Hyman R.W."/>
            <person name="Carlton J.M."/>
            <person name="Pain A."/>
            <person name="Nelson K.E."/>
            <person name="Bowman S."/>
            <person name="Paulsen I.T."/>
            <person name="James K.D."/>
            <person name="Eisen J.A."/>
            <person name="Rutherford K.M."/>
            <person name="Salzberg S.L."/>
            <person name="Craig A."/>
            <person name="Kyes S."/>
            <person name="Chan M.-S."/>
            <person name="Nene V."/>
            <person name="Shallom S.J."/>
            <person name="Suh B."/>
            <person name="Peterson J."/>
            <person name="Angiuoli S."/>
            <person name="Pertea M."/>
            <person name="Allen J."/>
            <person name="Selengut J."/>
            <person name="Haft D."/>
            <person name="Mather M.W."/>
            <person name="Vaidya A.B."/>
            <person name="Martin D.M.A."/>
            <person name="Fairlamb A.H."/>
            <person name="Fraunholz M.J."/>
            <person name="Roos D.S."/>
            <person name="Ralph S.A."/>
            <person name="McFadden G.I."/>
            <person name="Cummings L.M."/>
            <person name="Subramanian G.M."/>
            <person name="Mungall C."/>
            <person name="Venter J.C."/>
            <person name="Carucci D.J."/>
            <person name="Hoffman S.L."/>
            <person name="Newbold C."/>
            <person name="Davis R.W."/>
            <person name="Fraser C.M."/>
            <person name="Barrell B.G."/>
        </authorList>
    </citation>
    <scope>NUCLEOTIDE SEQUENCE [LARGE SCALE GENOMIC DNA]</scope>
    <source>
        <strain evidence="20">3D7</strain>
    </source>
</reference>
<reference evidence="20" key="2">
    <citation type="journal article" date="2002" name="Nature">
        <title>Sequence of Plasmodium falciparum chromosomes 1, 3-9 and 13.</title>
        <authorList>
            <person name="Hall N."/>
            <person name="Pain A."/>
            <person name="Berriman M."/>
            <person name="Churcher C.M."/>
            <person name="Harris B."/>
            <person name="Harris D."/>
            <person name="Mungall K.L."/>
            <person name="Bowman S."/>
            <person name="Atkin R."/>
            <person name="Baker S."/>
            <person name="Barron A."/>
            <person name="Brooks K."/>
            <person name="Buckee C.O."/>
            <person name="Burrows C."/>
            <person name="Cherevach I."/>
            <person name="Chillingworth C."/>
            <person name="Chillingworth T."/>
            <person name="Christodoulou Z."/>
            <person name="Clark L."/>
            <person name="Clark R."/>
            <person name="Corton C."/>
            <person name="Cronin A."/>
            <person name="Davies R.M."/>
            <person name="Davis P."/>
            <person name="Dear P."/>
            <person name="Dearden F."/>
            <person name="Doggett J."/>
            <person name="Feltwell T."/>
            <person name="Goble A."/>
            <person name="Goodhead I."/>
            <person name="Gwilliam R."/>
            <person name="Hamlin N."/>
            <person name="Hance Z."/>
            <person name="Harper D."/>
            <person name="Hauser H."/>
            <person name="Hornsby T."/>
            <person name="Holroyd S."/>
            <person name="Horrocks P."/>
            <person name="Humphray S."/>
            <person name="Jagels K."/>
            <person name="James K.D."/>
            <person name="Johnson D."/>
            <person name="Kerhornou A."/>
            <person name="Knights A."/>
            <person name="Konfortov B."/>
            <person name="Kyes S."/>
            <person name="Larke N."/>
            <person name="Lawson D."/>
            <person name="Lennard N."/>
            <person name="Line A."/>
            <person name="Maddison M."/>
            <person name="Mclean J."/>
            <person name="Mooney P."/>
            <person name="Moule S."/>
            <person name="Murphy L."/>
            <person name="Oliver K."/>
            <person name="Ormond D."/>
            <person name="Price C."/>
            <person name="Quail M.A."/>
            <person name="Rabbinowitsch E."/>
            <person name="Rajandream M.A."/>
            <person name="Rutter S."/>
            <person name="Rutherford K.M."/>
            <person name="Sanders M."/>
            <person name="Simmonds M."/>
            <person name="Seeger K."/>
            <person name="Sharp S."/>
            <person name="Smith R."/>
            <person name="Squares R."/>
            <person name="Squares S."/>
            <person name="Stevens K."/>
            <person name="Taylor K."/>
            <person name="Tivey A."/>
            <person name="Unwin L."/>
            <person name="Whitehead S."/>
            <person name="Woodward J.R."/>
            <person name="Sulston J.E."/>
            <person name="Craig A."/>
            <person name="Newbold C."/>
            <person name="Barrell B.G."/>
        </authorList>
    </citation>
    <scope>NUCLEOTIDE SEQUENCE [LARGE SCALE GENOMIC DNA]</scope>
    <source>
        <strain evidence="20">3D7</strain>
    </source>
</reference>
<reference evidence="18" key="3">
    <citation type="journal article" date="2007" name="Cell">
        <title>Subcellular discharge of a serine protease mediates release of invasive malaria parasites from host erythrocytes.</title>
        <authorList>
            <person name="Yeoh S."/>
            <person name="O'Donnell R.A."/>
            <person name="Koussis K."/>
            <person name="Dluzewski A.R."/>
            <person name="Ansell K.H."/>
            <person name="Osborne S.A."/>
            <person name="Hackett F."/>
            <person name="Withers-Martinez C."/>
            <person name="Mitchell G.H."/>
            <person name="Bannister L.H."/>
            <person name="Bryans J.S."/>
            <person name="Kettleborough C.A."/>
            <person name="Blackman M.J."/>
        </authorList>
    </citation>
    <scope>FUNCTION</scope>
    <scope>CATALYTIC ACTIVITY</scope>
    <scope>ACTIVITY REGULATION</scope>
    <scope>SUBCELLULAR LOCATION</scope>
    <scope>DEVELOPMENTAL STAGE</scope>
    <scope>DISRUPTION PHENOTYPE</scope>
    <scope>MUTAGENESIS OF SER-606</scope>
</reference>
<reference evidence="18" key="4">
    <citation type="journal article" date="2009" name="EMBO J.">
        <title>A multifunctional serine protease primes the malaria parasite for red blood cell invasion.</title>
        <authorList>
            <person name="Koussis K."/>
            <person name="Withers-Martinez C."/>
            <person name="Yeoh S."/>
            <person name="Child M."/>
            <person name="Hackett F."/>
            <person name="Knuepfer E."/>
            <person name="Juliano L."/>
            <person name="Woehlbier U."/>
            <person name="Bujard H."/>
            <person name="Blackman M.J."/>
        </authorList>
    </citation>
    <scope>FUNCTION</scope>
    <scope>CATALYTIC ACTIVITY</scope>
    <scope>ACTIVITY REGULATION</scope>
</reference>
<reference evidence="18" key="5">
    <citation type="journal article" date="2011" name="Infect. Immun.">
        <title>Global identification of multiple substrates for Plasmodium falciparum SUB1, an essential malarial processing protease.</title>
        <authorList>
            <person name="Silmon de Monerri N.C."/>
            <person name="Flynn H.R."/>
            <person name="Campos M.G."/>
            <person name="Hackett F."/>
            <person name="Koussis K."/>
            <person name="Withers-Martinez C."/>
            <person name="Skehel J.M."/>
            <person name="Blackman M.J."/>
        </authorList>
    </citation>
    <scope>FUNCTION</scope>
    <scope>CATALYTIC ACTIVITY</scope>
</reference>
<reference key="6">
    <citation type="journal article" date="2018" name="Nat. Microbiol.">
        <title>A protease cascade regulates release of the human malaria parasite Plasmodium falciparum from host red blood cells.</title>
        <authorList>
            <person name="Thomas J.A."/>
            <person name="Tan M.S.Y."/>
            <person name="Bisson C."/>
            <person name="Borg A."/>
            <person name="Umrekar T.R."/>
            <person name="Hackett F."/>
            <person name="Hale V.L."/>
            <person name="Vizcay-Barrena G."/>
            <person name="Fleck R.A."/>
            <person name="Snijders A.P."/>
            <person name="Saibil H.R."/>
            <person name="Blackman M.J."/>
        </authorList>
    </citation>
    <scope>FUNCTION</scope>
    <scope>DISRUPTION PHENOTYPE</scope>
</reference>
<reference evidence="18" key="7">
    <citation type="journal article" date="2020" name="Biochem. J.">
        <title>A malaria parasite subtilisin propeptide-like protein is a potent inhibitor of the egress protease SUB1.</title>
        <authorList>
            <person name="Tarr S.J."/>
            <person name="Withers-Martinez C."/>
            <person name="Flynn H.R."/>
            <person name="Snijders A.P."/>
            <person name="Masino L."/>
            <person name="Koussis K."/>
            <person name="Conway D.J."/>
            <person name="Blackman M.J."/>
        </authorList>
    </citation>
    <scope>CATALYTIC ACTIVITY</scope>
    <scope>ACTIVITY REGULATION</scope>
</reference>
<reference key="8">
    <citation type="journal article" date="2020" name="Cell Host Microbe">
        <title>Dual Plasmepsin-Targeting Antimalarial Agents Disrupt Multiple Stages of the Malaria Parasite Life Cycle.</title>
        <authorList>
            <person name="Favuzza P."/>
            <person name="de Lera Ruiz M."/>
            <person name="Thompson J.K."/>
            <person name="Triglia T."/>
            <person name="Ngo A."/>
            <person name="Steel R.W.J."/>
            <person name="Vavrek M."/>
            <person name="Christensen J."/>
            <person name="Healer J."/>
            <person name="Boyce C."/>
            <person name="Guo Z."/>
            <person name="Hu M."/>
            <person name="Khan T."/>
            <person name="Murgolo N."/>
            <person name="Zhao L."/>
            <person name="Penington J.S."/>
            <person name="Reaksudsan K."/>
            <person name="Jarman K."/>
            <person name="Dietrich M.H."/>
            <person name="Richardson L."/>
            <person name="Guo K.Y."/>
            <person name="Lopaticki S."/>
            <person name="Tham W.H."/>
            <person name="Rottmann M."/>
            <person name="Papenfuss T."/>
            <person name="Robbins J.A."/>
            <person name="Boddey J.A."/>
            <person name="Sleebs B.E."/>
            <person name="Sabroux H.J."/>
            <person name="McCauley J.A."/>
            <person name="Olsen D.B."/>
            <person name="Cowman A.F."/>
        </authorList>
    </citation>
    <scope>PROTEOLYTIC CLEAVAGE</scope>
</reference>
<reference key="9">
    <citation type="journal article" date="2024" name="Biochim. Biophys. Acta">
        <title>The malaria parasite egress protease SUB1 is activated through precise, plasmepsin X-mediated cleavage of the SUB1 prodomain.</title>
        <authorList>
            <person name="Withers-Martinez C."/>
            <person name="George R."/>
            <person name="Maslen S."/>
            <person name="Jean L."/>
            <person name="Hackett F."/>
            <person name="Skehel M."/>
            <person name="Blackman M.J."/>
        </authorList>
    </citation>
    <scope>CATALYTIC ACTIVITY</scope>
    <scope>SUBUNIT</scope>
    <scope>PROTEOLYTIC CLEAVAGE BY PMX</scope>
    <scope>CLEAVAGE SITES</scope>
</reference>
<reference evidence="21" key="10">
    <citation type="journal article" date="2024" name="MBio">
        <title>Prodomain-driven enzyme dimerization: a pH-dependent autoinhibition mechanism that controls Plasmodium Sub1 activity before merozoite egress.</title>
        <authorList>
            <person name="Martinez M."/>
            <person name="Bouillon A."/>
            <person name="Brule S."/>
            <person name="Raynal B."/>
            <person name="Haouz A."/>
            <person name="Alzari P.M."/>
            <person name="Barale J.C."/>
        </authorList>
    </citation>
    <scope>X-RAY CRYSTALLOGRAPHY (3.09 ANGSTROMS) OF 1-688 IN COMPLEX WITH CALCIUM</scope>
    <scope>SUBUNIT</scope>
    <scope>DEVELOPMENTAL STAGE</scope>
    <scope>DISULFIDE BONDS</scope>
</reference>
<dbReference type="EC" id="3.4.21.62" evidence="8 9 10 12 15"/>
<dbReference type="EMBL" id="AL844504">
    <property type="protein sequence ID" value="CAD51440.1"/>
    <property type="molecule type" value="Genomic_DNA"/>
</dbReference>
<dbReference type="RefSeq" id="XP_001351633.1">
    <property type="nucleotide sequence ID" value="XM_001351597.1"/>
</dbReference>
<dbReference type="PDB" id="8POL">
    <property type="method" value="X-ray"/>
    <property type="resolution" value="3.09 A"/>
    <property type="chains" value="A/B=1-688"/>
</dbReference>
<dbReference type="PDBsum" id="8POL"/>
<dbReference type="SMR" id="Q8I0V0"/>
<dbReference type="IntAct" id="Q8I0V0">
    <property type="interactions" value="3"/>
</dbReference>
<dbReference type="STRING" id="36329.Q8I0V0"/>
<dbReference type="GuidetoPHARMACOLOGY" id="3184"/>
<dbReference type="MEROPS" id="S08.012"/>
<dbReference type="GlyCosmos" id="Q8I0V0">
    <property type="glycosylation" value="11 sites, No reported glycans"/>
</dbReference>
<dbReference type="PaxDb" id="5833-PFE0370c"/>
<dbReference type="EnsemblProtists" id="CAD51440">
    <property type="protein sequence ID" value="CAD51440"/>
    <property type="gene ID" value="PF3D7_0507500"/>
</dbReference>
<dbReference type="GeneID" id="812875"/>
<dbReference type="KEGG" id="pfa:PF3D7_0507500"/>
<dbReference type="VEuPathDB" id="PlasmoDB:PF3D7_0507500"/>
<dbReference type="HOGENOM" id="CLU_455979_0_0_1"/>
<dbReference type="InParanoid" id="Q8I0V0"/>
<dbReference type="OMA" id="YRNLQWG"/>
<dbReference type="OrthoDB" id="531541at2759"/>
<dbReference type="PhylomeDB" id="Q8I0V0"/>
<dbReference type="Reactome" id="R-PFA-2173796">
    <property type="pathway name" value="SMAD2/SMAD3:SMAD4 heterotrimer regulates transcription"/>
</dbReference>
<dbReference type="Proteomes" id="UP000001450">
    <property type="component" value="Chromosome 5"/>
</dbReference>
<dbReference type="GO" id="GO:0044311">
    <property type="term" value="C:exoneme"/>
    <property type="evidence" value="ECO:0000314"/>
    <property type="project" value="UniProtKB"/>
</dbReference>
<dbReference type="GO" id="GO:0016020">
    <property type="term" value="C:membrane"/>
    <property type="evidence" value="ECO:0000318"/>
    <property type="project" value="GO_Central"/>
</dbReference>
<dbReference type="GO" id="GO:0020026">
    <property type="term" value="C:merozoite dense granule"/>
    <property type="evidence" value="ECO:0000314"/>
    <property type="project" value="GeneDB"/>
</dbReference>
<dbReference type="GO" id="GO:0020004">
    <property type="term" value="C:symbiont-containing vacuolar space"/>
    <property type="evidence" value="ECO:0000314"/>
    <property type="project" value="UniProtKB"/>
</dbReference>
<dbReference type="GO" id="GO:0020003">
    <property type="term" value="C:symbiont-containing vacuole"/>
    <property type="evidence" value="ECO:0000314"/>
    <property type="project" value="GeneDB"/>
</dbReference>
<dbReference type="GO" id="GO:0046872">
    <property type="term" value="F:metal ion binding"/>
    <property type="evidence" value="ECO:0007669"/>
    <property type="project" value="UniProtKB-KW"/>
</dbReference>
<dbReference type="GO" id="GO:0004252">
    <property type="term" value="F:serine-type endopeptidase activity"/>
    <property type="evidence" value="ECO:0000314"/>
    <property type="project" value="UniProtKB"/>
</dbReference>
<dbReference type="GO" id="GO:0008236">
    <property type="term" value="F:serine-type peptidase activity"/>
    <property type="evidence" value="ECO:0000314"/>
    <property type="project" value="UniProtKB"/>
</dbReference>
<dbReference type="GO" id="GO:0006509">
    <property type="term" value="P:membrane protein ectodomain proteolysis"/>
    <property type="evidence" value="ECO:0000315"/>
    <property type="project" value="UniProtKB"/>
</dbReference>
<dbReference type="GO" id="GO:0016485">
    <property type="term" value="P:protein processing"/>
    <property type="evidence" value="ECO:0000314"/>
    <property type="project" value="UniProtKB"/>
</dbReference>
<dbReference type="GO" id="GO:0006508">
    <property type="term" value="P:proteolysis"/>
    <property type="evidence" value="ECO:0000304"/>
    <property type="project" value="GeneDB"/>
</dbReference>
<dbReference type="CDD" id="cd07473">
    <property type="entry name" value="Peptidases_S8_Subtilisin_like"/>
    <property type="match status" value="1"/>
</dbReference>
<dbReference type="FunFam" id="3.40.50.200:FF:000023">
    <property type="entry name" value="Subtilisin-like protease 1"/>
    <property type="match status" value="1"/>
</dbReference>
<dbReference type="Gene3D" id="3.30.70.2380">
    <property type="match status" value="1"/>
</dbReference>
<dbReference type="Gene3D" id="3.40.50.200">
    <property type="entry name" value="Peptidase S8/S53 domain"/>
    <property type="match status" value="1"/>
</dbReference>
<dbReference type="InterPro" id="IPR017314">
    <property type="entry name" value="Pept_S8A_PfSUB_1"/>
</dbReference>
<dbReference type="InterPro" id="IPR000209">
    <property type="entry name" value="Peptidase_S8/S53_dom"/>
</dbReference>
<dbReference type="InterPro" id="IPR036852">
    <property type="entry name" value="Peptidase_S8/S53_dom_sf"/>
</dbReference>
<dbReference type="InterPro" id="IPR051048">
    <property type="entry name" value="Peptidase_S8/S53_subtilisin"/>
</dbReference>
<dbReference type="InterPro" id="IPR023827">
    <property type="entry name" value="Peptidase_S8_Asp-AS"/>
</dbReference>
<dbReference type="InterPro" id="IPR022398">
    <property type="entry name" value="Peptidase_S8_His-AS"/>
</dbReference>
<dbReference type="InterPro" id="IPR023828">
    <property type="entry name" value="Peptidase_S8_Ser-AS"/>
</dbReference>
<dbReference type="InterPro" id="IPR015500">
    <property type="entry name" value="Peptidase_S8_subtilisin-rel"/>
</dbReference>
<dbReference type="InterPro" id="IPR034204">
    <property type="entry name" value="PfSUB1-like_cat_dom"/>
</dbReference>
<dbReference type="InterPro" id="IPR041089">
    <property type="entry name" value="SUB1_ProdP9"/>
</dbReference>
<dbReference type="PANTHER" id="PTHR43399:SF4">
    <property type="entry name" value="CELL WALL-ASSOCIATED PROTEASE"/>
    <property type="match status" value="1"/>
</dbReference>
<dbReference type="PANTHER" id="PTHR43399">
    <property type="entry name" value="SUBTILISIN-RELATED"/>
    <property type="match status" value="1"/>
</dbReference>
<dbReference type="Pfam" id="PF00082">
    <property type="entry name" value="Peptidase_S8"/>
    <property type="match status" value="1"/>
</dbReference>
<dbReference type="Pfam" id="PF18213">
    <property type="entry name" value="SUB1_ProdP9"/>
    <property type="match status" value="1"/>
</dbReference>
<dbReference type="PIRSF" id="PIRSF037900">
    <property type="entry name" value="Subtilisin_rel_PfSUB_1"/>
    <property type="match status" value="1"/>
</dbReference>
<dbReference type="PRINTS" id="PR00723">
    <property type="entry name" value="SUBTILISIN"/>
</dbReference>
<dbReference type="SUPFAM" id="SSF52743">
    <property type="entry name" value="Subtilisin-like"/>
    <property type="match status" value="1"/>
</dbReference>
<dbReference type="PROSITE" id="PS51892">
    <property type="entry name" value="SUBTILASE"/>
    <property type="match status" value="1"/>
</dbReference>
<dbReference type="PROSITE" id="PS00136">
    <property type="entry name" value="SUBTILASE_ASP"/>
    <property type="match status" value="1"/>
</dbReference>
<dbReference type="PROSITE" id="PS00137">
    <property type="entry name" value="SUBTILASE_HIS"/>
    <property type="match status" value="1"/>
</dbReference>
<dbReference type="PROSITE" id="PS00138">
    <property type="entry name" value="SUBTILASE_SER"/>
    <property type="match status" value="1"/>
</dbReference>
<accession>Q8I0V0</accession>
<name>SUB1_PLAF7</name>
<proteinExistence type="evidence at protein level"/>